<comment type="function">
    <text evidence="2 3 8 11 13 14 15">Serine/threonine kinase which acts as a negative regulator of Ras-related Rap2-mediated signal transduction to control neuronal structure and AMPA receptor trafficking (PubMed:10708748, PubMed:16337592). Required for normal synaptic density, dendrite complexity, as well as surface AMPA receptor expression in hippocampal neurons (By similarity). Can activate the JNK and MAPK14/p38 pathways and mediates stimulation of the stress-activated protein kinase MAPK14/p38 MAPK downstream of the Raf/ERK pathway. Phosphorylates TANC1 upon stimulation by RAP2A, MBP and SMAD1 (PubMed:18930710, PubMed:21690388). Has an essential function in negative selection of thymocytes, perhaps by coupling NCK1 to activation of JNK1 (By similarity). Activator of the Hippo signaling pathway which plays a pivotal role in organ size control and tumor suppression by restricting proliferation and promoting apoptosis. MAP4Ks act in parallel to and are partially redundant with STK3/MST2 and STK4/MST2 in the phosphorylation and activation of LATS1/2, and establish MAP4Ks as components of the expanded Hippo pathway (PubMed:26437443).</text>
</comment>
<comment type="function">
    <text>Isoform 4 can activate the JNK pathway. Involved in the regulation of actin cytoskeleton reorganization, cell-matrix adhesion, cell-cell adhesion and cell migration.</text>
</comment>
<comment type="catalytic activity">
    <reaction evidence="3">
        <text>L-seryl-[protein] + ATP = O-phospho-L-seryl-[protein] + ADP + H(+)</text>
        <dbReference type="Rhea" id="RHEA:17989"/>
        <dbReference type="Rhea" id="RHEA-COMP:9863"/>
        <dbReference type="Rhea" id="RHEA-COMP:11604"/>
        <dbReference type="ChEBI" id="CHEBI:15378"/>
        <dbReference type="ChEBI" id="CHEBI:29999"/>
        <dbReference type="ChEBI" id="CHEBI:30616"/>
        <dbReference type="ChEBI" id="CHEBI:83421"/>
        <dbReference type="ChEBI" id="CHEBI:456216"/>
        <dbReference type="EC" id="2.7.11.1"/>
    </reaction>
</comment>
<comment type="catalytic activity">
    <reaction evidence="3">
        <text>L-threonyl-[protein] + ATP = O-phospho-L-threonyl-[protein] + ADP + H(+)</text>
        <dbReference type="Rhea" id="RHEA:46608"/>
        <dbReference type="Rhea" id="RHEA-COMP:11060"/>
        <dbReference type="Rhea" id="RHEA-COMP:11605"/>
        <dbReference type="ChEBI" id="CHEBI:15378"/>
        <dbReference type="ChEBI" id="CHEBI:30013"/>
        <dbReference type="ChEBI" id="CHEBI:30616"/>
        <dbReference type="ChEBI" id="CHEBI:61977"/>
        <dbReference type="ChEBI" id="CHEBI:456216"/>
        <dbReference type="EC" id="2.7.11.1"/>
    </reaction>
</comment>
<comment type="cofactor">
    <cofactor evidence="3">
        <name>Mg(2+)</name>
        <dbReference type="ChEBI" id="CHEBI:18420"/>
    </cofactor>
</comment>
<comment type="subunit">
    <text evidence="1 9 13">Interacts with TANC1 (By similarity). Interacts with RAP2A. Isoform 4 interacts with NCK1.</text>
</comment>
<comment type="interaction">
    <interactant intactId="EBI-2133481">
        <id>Q8N4C8</id>
    </interactant>
    <interactant intactId="EBI-719620">
        <id>Q00613</id>
        <label>HSF1</label>
    </interactant>
    <organismsDiffer>false</organismsDiffer>
    <experiments>2</experiments>
</comment>
<comment type="interaction">
    <interactant intactId="EBI-2133481">
        <id>Q8N4C8</id>
    </interactant>
    <interactant intactId="EBI-2511133">
        <id>O95819</id>
        <label>MAP4K4</label>
    </interactant>
    <organismsDiffer>false</organismsDiffer>
    <experiments>3</experiments>
</comment>
<comment type="interaction">
    <interactant intactId="EBI-2133481">
        <id>Q8N4C8</id>
    </interactant>
    <interactant intactId="EBI-602366">
        <id>P10114</id>
        <label>RAP2A</label>
    </interactant>
    <organismsDiffer>false</organismsDiffer>
    <experiments>3</experiments>
</comment>
<comment type="interaction">
    <interactant intactId="EBI-2133481">
        <id>Q8N4C8</id>
    </interactant>
    <interactant intactId="EBI-476295">
        <id>P31947</id>
        <label>SFN</label>
    </interactant>
    <organismsDiffer>false</organismsDiffer>
    <experiments>3</experiments>
</comment>
<comment type="interaction">
    <interactant intactId="EBI-2133481">
        <id>Q8N4C8</id>
    </interactant>
    <interactant intactId="EBI-356498">
        <id>P62258</id>
        <label>YWHAE</label>
    </interactant>
    <organismsDiffer>false</organismsDiffer>
    <experiments>3</experiments>
</comment>
<comment type="interaction">
    <interactant intactId="EBI-11475194">
        <id>Q8N4C8-4</id>
    </interactant>
    <interactant intactId="EBI-1774000">
        <id>Q5VY09</id>
        <label>IER5</label>
    </interactant>
    <organismsDiffer>false</organismsDiffer>
    <experiments>2</experiments>
</comment>
<comment type="subcellular location">
    <subcellularLocation>
        <location evidence="9 13">Cytoplasm</location>
    </subcellularLocation>
    <subcellularLocation>
        <location evidence="1">Postsynaptic density</location>
    </subcellularLocation>
    <subcellularLocation>
        <location evidence="1">Cell projection</location>
        <location evidence="1">Axon</location>
    </subcellularLocation>
    <subcellularLocation>
        <location evidence="1">Cell projection</location>
        <location evidence="1">Dendrite</location>
    </subcellularLocation>
</comment>
<comment type="subcellular location">
    <molecule>Isoform 4</molecule>
    <subcellularLocation>
        <location>Golgi apparatus</location>
    </subcellularLocation>
</comment>
<comment type="alternative products">
    <event type="alternative splicing"/>
    <isoform>
        <id>Q8N4C8-1</id>
        <name evidence="8">3</name>
        <name>MINK-alpha</name>
        <sequence type="displayed"/>
    </isoform>
    <isoform>
        <id>Q8N4C8-2</id>
        <name evidence="8">1</name>
        <name>MiNK-1</name>
        <name>MINK-delta</name>
        <sequence type="described" ref="VSP_007059"/>
    </isoform>
    <isoform>
        <id>Q8N4C8-3</id>
        <name evidence="8">2</name>
        <name>MiNK-2</name>
        <name>MINK-gamma</name>
        <sequence type="described" ref="VSP_007059 VSP_007060"/>
    </isoform>
    <isoform>
        <id>Q8N4C8-4</id>
        <name>4</name>
        <name>MINK-beta</name>
        <sequence type="described" ref="VSP_041871"/>
    </isoform>
    <isoform>
        <id>Q8N4C8-5</id>
        <name>5</name>
        <name>MINK-eta</name>
        <sequence type="described" ref="VSP_041871 VSP_007059"/>
    </isoform>
</comment>
<comment type="tissue specificity">
    <text evidence="9">Expressed in the brain, isoform 2 is more abundant than isoform 1. Isoform 3 is ubiquitously expressed. Isoform 1 is most abundant in the skeletal muscle. Isoform 4 is ubiquitously expressed with relative high levels in brain, skeletal muscle, pancreas and testis.</text>
</comment>
<comment type="induction">
    <text evidence="11">Activated after Ras induction via a mechanism involving reactive oxygen species.</text>
</comment>
<comment type="PTM">
    <text>Autophosphorylated.</text>
</comment>
<comment type="similarity">
    <text evidence="18">Belongs to the protein kinase superfamily. STE Ser/Thr protein kinase family. STE20 subfamily.</text>
</comment>
<reference evidence="18" key="1">
    <citation type="journal article" date="2000" name="FEBS Lett.">
        <title>Molecular cloning of MINK, a novel member of mammalian GCK family kinases, which is up-regulated during postnatal mouse cerebral development.</title>
        <authorList>
            <person name="Dan I."/>
            <person name="Watanabe N.M."/>
            <person name="Kobayashi T."/>
            <person name="Yamashita-Suzuki K."/>
            <person name="Fukagaya Y."/>
            <person name="Kajikawa E."/>
            <person name="Kimura W.K."/>
            <person name="Nakashima T.M."/>
            <person name="Matsumoto K."/>
            <person name="Ninomiya-Tsuji J."/>
            <person name="Kusumi A."/>
        </authorList>
    </citation>
    <scope>NUCLEOTIDE SEQUENCE [MRNA] (ISOFORMS 1 AND 2)</scope>
    <source>
        <tissue>Brain</tissue>
    </source>
</reference>
<reference key="2">
    <citation type="journal article" date="2004" name="J. Biol. Chem.">
        <title>Identification and functional characterization of a novel human misshapen/Nck interacting kinase-related kinase, hMINK beta.</title>
        <authorList>
            <person name="Hu Y."/>
            <person name="Leo C."/>
            <person name="Yu S."/>
            <person name="Huang B.C."/>
            <person name="Wang H."/>
            <person name="Shen M."/>
            <person name="Luo Y."/>
            <person name="Daniel-Issakani S."/>
            <person name="Payan D.G."/>
            <person name="Xu X."/>
        </authorList>
    </citation>
    <scope>NUCLEOTIDE SEQUENCE [MRNA] (ISOFORM 4)</scope>
    <scope>FUNCTION</scope>
    <scope>SUBCELLULAR LOCATION</scope>
    <scope>INTERACTION WITH NCK1</scope>
    <scope>TISSUE SPECIFICITY</scope>
    <scope>ALTERNATIVE SPLICING</scope>
    <scope>AUTOPHOSPHORYLATION</scope>
    <scope>VARIANTS ALA-771 AND LEU-775</scope>
</reference>
<reference key="3">
    <citation type="journal article" date="2005" name="J. Biol. Chem.">
        <authorList>
            <person name="Hu Y."/>
            <person name="Leo C."/>
            <person name="Yu S."/>
            <person name="Huang B.C."/>
            <person name="Wang H."/>
            <person name="Shen M."/>
            <person name="Luo Y."/>
            <person name="Daniel-Issakani S."/>
            <person name="Payan D.G."/>
            <person name="Xu X."/>
        </authorList>
    </citation>
    <scope>ERRATUM OF PUBMED:15469942</scope>
</reference>
<reference key="4">
    <citation type="journal article" date="2006" name="Nature">
        <title>DNA sequence of human chromosome 17 and analysis of rearrangement in the human lineage.</title>
        <authorList>
            <person name="Zody M.C."/>
            <person name="Garber M."/>
            <person name="Adams D.J."/>
            <person name="Sharpe T."/>
            <person name="Harrow J."/>
            <person name="Lupski J.R."/>
            <person name="Nicholson C."/>
            <person name="Searle S.M."/>
            <person name="Wilming L."/>
            <person name="Young S.K."/>
            <person name="Abouelleil A."/>
            <person name="Allen N.R."/>
            <person name="Bi W."/>
            <person name="Bloom T."/>
            <person name="Borowsky M.L."/>
            <person name="Bugalter B.E."/>
            <person name="Butler J."/>
            <person name="Chang J.L."/>
            <person name="Chen C.-K."/>
            <person name="Cook A."/>
            <person name="Corum B."/>
            <person name="Cuomo C.A."/>
            <person name="de Jong P.J."/>
            <person name="DeCaprio D."/>
            <person name="Dewar K."/>
            <person name="FitzGerald M."/>
            <person name="Gilbert J."/>
            <person name="Gibson R."/>
            <person name="Gnerre S."/>
            <person name="Goldstein S."/>
            <person name="Grafham D.V."/>
            <person name="Grocock R."/>
            <person name="Hafez N."/>
            <person name="Hagopian D.S."/>
            <person name="Hart E."/>
            <person name="Norman C.H."/>
            <person name="Humphray S."/>
            <person name="Jaffe D.B."/>
            <person name="Jones M."/>
            <person name="Kamal M."/>
            <person name="Khodiyar V.K."/>
            <person name="LaButti K."/>
            <person name="Laird G."/>
            <person name="Lehoczky J."/>
            <person name="Liu X."/>
            <person name="Lokyitsang T."/>
            <person name="Loveland J."/>
            <person name="Lui A."/>
            <person name="Macdonald P."/>
            <person name="Major J.E."/>
            <person name="Matthews L."/>
            <person name="Mauceli E."/>
            <person name="McCarroll S.A."/>
            <person name="Mihalev A.H."/>
            <person name="Mudge J."/>
            <person name="Nguyen C."/>
            <person name="Nicol R."/>
            <person name="O'Leary S.B."/>
            <person name="Osoegawa K."/>
            <person name="Schwartz D.C."/>
            <person name="Shaw-Smith C."/>
            <person name="Stankiewicz P."/>
            <person name="Steward C."/>
            <person name="Swarbreck D."/>
            <person name="Venkataraman V."/>
            <person name="Whittaker C.A."/>
            <person name="Yang X."/>
            <person name="Zimmer A.R."/>
            <person name="Bradley A."/>
            <person name="Hubbard T."/>
            <person name="Birren B.W."/>
            <person name="Rogers J."/>
            <person name="Lander E.S."/>
            <person name="Nusbaum C."/>
        </authorList>
    </citation>
    <scope>NUCLEOTIDE SEQUENCE [LARGE SCALE GENOMIC DNA]</scope>
</reference>
<reference evidence="18" key="5">
    <citation type="submission" date="2005-09" db="EMBL/GenBank/DDBJ databases">
        <authorList>
            <person name="Mural R.J."/>
            <person name="Istrail S."/>
            <person name="Sutton G.G."/>
            <person name="Florea L."/>
            <person name="Halpern A.L."/>
            <person name="Mobarry C.M."/>
            <person name="Lippert R."/>
            <person name="Walenz B."/>
            <person name="Shatkay H."/>
            <person name="Dew I."/>
            <person name="Miller J.R."/>
            <person name="Flanigan M.J."/>
            <person name="Edwards N.J."/>
            <person name="Bolanos R."/>
            <person name="Fasulo D."/>
            <person name="Halldorsson B.V."/>
            <person name="Hannenhalli S."/>
            <person name="Turner R."/>
            <person name="Yooseph S."/>
            <person name="Lu F."/>
            <person name="Nusskern D.R."/>
            <person name="Shue B.C."/>
            <person name="Zheng X.H."/>
            <person name="Zhong F."/>
            <person name="Delcher A.L."/>
            <person name="Huson D.H."/>
            <person name="Kravitz S.A."/>
            <person name="Mouchard L."/>
            <person name="Reinert K."/>
            <person name="Remington K.A."/>
            <person name="Clark A.G."/>
            <person name="Waterman M.S."/>
            <person name="Eichler E.E."/>
            <person name="Adams M.D."/>
            <person name="Hunkapiller M.W."/>
            <person name="Myers E.W."/>
            <person name="Venter J.C."/>
        </authorList>
    </citation>
    <scope>NUCLEOTIDE SEQUENCE [LARGE SCALE GENOMIC DNA]</scope>
</reference>
<reference key="6">
    <citation type="journal article" date="2004" name="Genome Res.">
        <title>The status, quality, and expansion of the NIH full-length cDNA project: the Mammalian Gene Collection (MGC).</title>
        <authorList>
            <consortium name="The MGC Project Team"/>
        </authorList>
    </citation>
    <scope>NUCLEOTIDE SEQUENCE [LARGE SCALE MRNA] (ISOFORM 3)</scope>
    <scope>VARIANTS ALA-771 AND LEU-775</scope>
    <source>
        <tissue>Lymph</tissue>
    </source>
</reference>
<reference key="7">
    <citation type="journal article" date="2005" name="Mol. Cell">
        <title>Involvement of MINK, a Ste20 family kinase, in Ras oncogene-induced growth arrest in human ovarian surface epithelial cells.</title>
        <authorList>
            <person name="Nicke B."/>
            <person name="Bastien J."/>
            <person name="Khanna S.J."/>
            <person name="Warne P.H."/>
            <person name="Cowling V."/>
            <person name="Cook S.J."/>
            <person name="Peters G."/>
            <person name="Delpuech O."/>
            <person name="Schulze A."/>
            <person name="Berns K."/>
            <person name="Mullenders J."/>
            <person name="Beijersbergen R.L."/>
            <person name="Bernards R."/>
            <person name="Ganesan T.S."/>
            <person name="Downward J."/>
            <person name="Hancock D.C."/>
        </authorList>
    </citation>
    <scope>FUNCTION</scope>
    <scope>INDUCTION</scope>
</reference>
<reference key="8">
    <citation type="journal article" date="2006" name="Cell">
        <title>Global, in vivo, and site-specific phosphorylation dynamics in signaling networks.</title>
        <authorList>
            <person name="Olsen J.V."/>
            <person name="Blagoev B."/>
            <person name="Gnad F."/>
            <person name="Macek B."/>
            <person name="Kumar C."/>
            <person name="Mortensen P."/>
            <person name="Mann M."/>
        </authorList>
    </citation>
    <scope>PHOSPHORYLATION [LARGE SCALE ANALYSIS] AT SER-763</scope>
    <scope>IDENTIFICATION BY MASS SPECTROMETRY [LARGE SCALE ANALYSIS]</scope>
    <source>
        <tissue>Cervix carcinoma</tissue>
    </source>
</reference>
<reference key="9">
    <citation type="journal article" date="2008" name="Biochem. Biophys. Res. Commun.">
        <title>MINK is a Rap2 effector for phosphorylation of the postsynaptic scaffold protein TANC1.</title>
        <authorList>
            <person name="Nonaka H."/>
            <person name="Takei K."/>
            <person name="Umikawa M."/>
            <person name="Oshiro M."/>
            <person name="Kuninaka K."/>
            <person name="Bayarjargal M."/>
            <person name="Asato T."/>
            <person name="Yamashiro Y."/>
            <person name="Uechi Y."/>
            <person name="Endo S."/>
            <person name="Suzuki T."/>
            <person name="Kariya K."/>
        </authorList>
    </citation>
    <scope>FUNCTION</scope>
    <scope>INTERACTION WITH RAP2A</scope>
    <scope>SUBCELLULAR LOCATION</scope>
</reference>
<reference key="10">
    <citation type="journal article" date="2008" name="J. Proteome Res.">
        <title>Combining protein-based IMAC, peptide-based IMAC, and MudPIT for efficient phosphoproteomic analysis.</title>
        <authorList>
            <person name="Cantin G.T."/>
            <person name="Yi W."/>
            <person name="Lu B."/>
            <person name="Park S.K."/>
            <person name="Xu T."/>
            <person name="Lee J.-D."/>
            <person name="Yates J.R. III"/>
        </authorList>
    </citation>
    <scope>PHOSPHORYLATION [LARGE SCALE ANALYSIS] AT SER-763</scope>
    <scope>IDENTIFICATION BY MASS SPECTROMETRY [LARGE SCALE ANALYSIS]</scope>
    <source>
        <tissue>Cervix carcinoma</tissue>
    </source>
</reference>
<reference key="11">
    <citation type="journal article" date="2008" name="J. Proteome Res.">
        <title>Phosphoproteome of resting human platelets.</title>
        <authorList>
            <person name="Zahedi R.P."/>
            <person name="Lewandrowski U."/>
            <person name="Wiesner J."/>
            <person name="Wortelkamp S."/>
            <person name="Moebius J."/>
            <person name="Schuetz C."/>
            <person name="Walter U."/>
            <person name="Gambaryan S."/>
            <person name="Sickmann A."/>
        </authorList>
    </citation>
    <scope>PHOSPHORYLATION [LARGE SCALE ANALYSIS] AT SER-763</scope>
    <scope>IDENTIFICATION BY MASS SPECTROMETRY [LARGE SCALE ANALYSIS]</scope>
    <source>
        <tissue>Platelet</tissue>
    </source>
</reference>
<reference key="12">
    <citation type="journal article" date="2008" name="Mol. Cell">
        <title>Kinase-selective enrichment enables quantitative phosphoproteomics of the kinome across the cell cycle.</title>
        <authorList>
            <person name="Daub H."/>
            <person name="Olsen J.V."/>
            <person name="Bairlein M."/>
            <person name="Gnad F."/>
            <person name="Oppermann F.S."/>
            <person name="Korner R."/>
            <person name="Greff Z."/>
            <person name="Keri G."/>
            <person name="Stemmann O."/>
            <person name="Mann M."/>
        </authorList>
    </citation>
    <scope>PHOSPHORYLATION [LARGE SCALE ANALYSIS] AT SER-641; SER-763 AND SER-782</scope>
    <scope>VARIANT [LARGE SCALE ANALYSIS] LEU-775</scope>
    <scope>IDENTIFICATION BY MASS SPECTROMETRY [LARGE SCALE ANALYSIS]</scope>
    <source>
        <tissue>Cervix carcinoma</tissue>
    </source>
</reference>
<reference key="13">
    <citation type="journal article" date="2008" name="Proc. Natl. Acad. Sci. U.S.A.">
        <title>A quantitative atlas of mitotic phosphorylation.</title>
        <authorList>
            <person name="Dephoure N."/>
            <person name="Zhou C."/>
            <person name="Villen J."/>
            <person name="Beausoleil S.A."/>
            <person name="Bakalarski C.E."/>
            <person name="Elledge S.J."/>
            <person name="Gygi S.P."/>
        </authorList>
    </citation>
    <scope>PHOSPHORYLATION [LARGE SCALE ANALYSIS] AT SER-763; SER-777; SER-778 AND SER-782</scope>
    <scope>VARIANT [LARGE SCALE ANALYSIS] LEU-775</scope>
    <scope>IDENTIFICATION BY MASS SPECTROMETRY [LARGE SCALE ANALYSIS]</scope>
    <source>
        <tissue>Cervix carcinoma</tissue>
    </source>
</reference>
<reference key="14">
    <citation type="journal article" date="2009" name="Mol. Cell. Proteomics">
        <title>Large-scale proteomics analysis of the human kinome.</title>
        <authorList>
            <person name="Oppermann F.S."/>
            <person name="Gnad F."/>
            <person name="Olsen J.V."/>
            <person name="Hornberger R."/>
            <person name="Greff Z."/>
            <person name="Keri G."/>
            <person name="Mann M."/>
            <person name="Daub H."/>
        </authorList>
    </citation>
    <scope>PHOSPHORYLATION [LARGE SCALE ANALYSIS] AT SER-763</scope>
    <scope>VARIANT [LARGE SCALE ANALYSIS] LEU-775</scope>
    <scope>IDENTIFICATION BY MASS SPECTROMETRY [LARGE SCALE ANALYSIS]</scope>
</reference>
<reference key="15">
    <citation type="journal article" date="2009" name="Sci. Signal.">
        <title>Quantitative phosphoproteomic analysis of T cell receptor signaling reveals system-wide modulation of protein-protein interactions.</title>
        <authorList>
            <person name="Mayya V."/>
            <person name="Lundgren D.H."/>
            <person name="Hwang S.-I."/>
            <person name="Rezaul K."/>
            <person name="Wu L."/>
            <person name="Eng J.K."/>
            <person name="Rodionov V."/>
            <person name="Han D.K."/>
        </authorList>
    </citation>
    <scope>PHOSPHORYLATION [LARGE SCALE ANALYSIS] AT SER-778</scope>
    <scope>VARIANT [LARGE SCALE ANALYSIS] LEU-775</scope>
    <scope>IDENTIFICATION BY MASS SPECTROMETRY [LARGE SCALE ANALYSIS]</scope>
    <source>
        <tissue>Leukemic T-cell</tissue>
    </source>
</reference>
<reference key="16">
    <citation type="journal article" date="2010" name="Sci. Signal.">
        <title>Quantitative phosphoproteomics reveals widespread full phosphorylation site occupancy during mitosis.</title>
        <authorList>
            <person name="Olsen J.V."/>
            <person name="Vermeulen M."/>
            <person name="Santamaria A."/>
            <person name="Kumar C."/>
            <person name="Miller M.L."/>
            <person name="Jensen L.J."/>
            <person name="Gnad F."/>
            <person name="Cox J."/>
            <person name="Jensen T.S."/>
            <person name="Nigg E.A."/>
            <person name="Brunak S."/>
            <person name="Mann M."/>
        </authorList>
    </citation>
    <scope>PHOSPHORYLATION [LARGE SCALE ANALYSIS] AT SER-763</scope>
    <scope>IDENTIFICATION BY MASS SPECTROMETRY [LARGE SCALE ANALYSIS]</scope>
    <source>
        <tissue>Cervix carcinoma</tissue>
    </source>
</reference>
<reference key="17">
    <citation type="journal article" date="2011" name="BMC Syst. Biol.">
        <title>Initial characterization of the human central proteome.</title>
        <authorList>
            <person name="Burkard T.R."/>
            <person name="Planyavsky M."/>
            <person name="Kaupe I."/>
            <person name="Breitwieser F.P."/>
            <person name="Buerckstuemmer T."/>
            <person name="Bennett K.L."/>
            <person name="Superti-Furga G."/>
            <person name="Colinge J."/>
        </authorList>
    </citation>
    <scope>IDENTIFICATION BY MASS SPECTROMETRY [LARGE SCALE ANALYSIS]</scope>
</reference>
<reference key="18">
    <citation type="journal article" date="2011" name="Proc. Natl. Acad. Sci. U.S.A.">
        <title>Smad inhibition by the Ste20 kinase Misshapen.</title>
        <authorList>
            <person name="Kaneko S."/>
            <person name="Chen X."/>
            <person name="Lu P."/>
            <person name="Yao X."/>
            <person name="Wright T.G."/>
            <person name="Rajurkar M."/>
            <person name="Kariya K."/>
            <person name="Mao J."/>
            <person name="Ip Y.T."/>
            <person name="Xu L."/>
        </authorList>
    </citation>
    <scope>FUNCTION</scope>
</reference>
<reference key="19">
    <citation type="journal article" date="2011" name="Sci. Signal.">
        <title>System-wide temporal characterization of the proteome and phosphoproteome of human embryonic stem cell differentiation.</title>
        <authorList>
            <person name="Rigbolt K.T."/>
            <person name="Prokhorova T.A."/>
            <person name="Akimov V."/>
            <person name="Henningsen J."/>
            <person name="Johansen P.T."/>
            <person name="Kratchmarova I."/>
            <person name="Kassem M."/>
            <person name="Mann M."/>
            <person name="Olsen J.V."/>
            <person name="Blagoev B."/>
        </authorList>
    </citation>
    <scope>PHOSPHORYLATION [LARGE SCALE ANALYSIS] AT SER-763</scope>
    <scope>IDENTIFICATION BY MASS SPECTROMETRY [LARGE SCALE ANALYSIS]</scope>
</reference>
<reference key="20">
    <citation type="journal article" date="2013" name="J. Proteome Res.">
        <title>Toward a comprehensive characterization of a human cancer cell phosphoproteome.</title>
        <authorList>
            <person name="Zhou H."/>
            <person name="Di Palma S."/>
            <person name="Preisinger C."/>
            <person name="Peng M."/>
            <person name="Polat A.N."/>
            <person name="Heck A.J."/>
            <person name="Mohammed S."/>
        </authorList>
    </citation>
    <scope>PHOSPHORYLATION [LARGE SCALE ANALYSIS] AT SER-641; SER-701; SER-754; SER-763 AND SER-778</scope>
    <scope>VARIANT [LARGE SCALE ANALYSIS] LEU-775</scope>
    <scope>IDENTIFICATION BY MASS SPECTROMETRY [LARGE SCALE ANALYSIS]</scope>
    <source>
        <tissue>Cervix carcinoma</tissue>
        <tissue>Erythroleukemia</tissue>
    </source>
</reference>
<reference key="21">
    <citation type="journal article" date="2014" name="J. Proteomics">
        <title>An enzyme assisted RP-RPLC approach for in-depth analysis of human liver phosphoproteome.</title>
        <authorList>
            <person name="Bian Y."/>
            <person name="Song C."/>
            <person name="Cheng K."/>
            <person name="Dong M."/>
            <person name="Wang F."/>
            <person name="Huang J."/>
            <person name="Sun D."/>
            <person name="Wang L."/>
            <person name="Ye M."/>
            <person name="Zou H."/>
        </authorList>
    </citation>
    <scope>PHOSPHORYLATION [LARGE SCALE ANALYSIS] AT SER-763</scope>
    <scope>IDENTIFICATION BY MASS SPECTROMETRY [LARGE SCALE ANALYSIS]</scope>
    <source>
        <tissue>Liver</tissue>
    </source>
</reference>
<reference key="22">
    <citation type="journal article" date="2014" name="Mol. Cell. Proteomics">
        <title>Immunoaffinity enrichment and mass spectrometry analysis of protein methylation.</title>
        <authorList>
            <person name="Guo A."/>
            <person name="Gu H."/>
            <person name="Zhou J."/>
            <person name="Mulhern D."/>
            <person name="Wang Y."/>
            <person name="Lee K.A."/>
            <person name="Yang V."/>
            <person name="Aguiar M."/>
            <person name="Kornhauser J."/>
            <person name="Jia X."/>
            <person name="Ren J."/>
            <person name="Beausoleil S.A."/>
            <person name="Silva J.C."/>
            <person name="Vemulapalli V."/>
            <person name="Bedford M.T."/>
            <person name="Comb M.J."/>
        </authorList>
    </citation>
    <scope>METHYLATION [LARGE SCALE ANALYSIS] AT ARG-509</scope>
    <scope>IDENTIFICATION BY MASS SPECTROMETRY [LARGE SCALE ANALYSIS]</scope>
    <source>
        <tissue>Colon carcinoma</tissue>
    </source>
</reference>
<reference key="23">
    <citation type="journal article" date="2015" name="Nat. Commun.">
        <title>MAP4K family kinases act in parallel to MST1/2 to activate LATS1/2 in the Hippo pathway.</title>
        <authorList>
            <person name="Meng Z."/>
            <person name="Moroishi T."/>
            <person name="Mottier-Pavie V."/>
            <person name="Plouffe S.W."/>
            <person name="Hansen C.G."/>
            <person name="Hong A.W."/>
            <person name="Park H.W."/>
            <person name="Mo J.S."/>
            <person name="Lu W."/>
            <person name="Lu S."/>
            <person name="Flores F."/>
            <person name="Yu F.X."/>
            <person name="Halder G."/>
            <person name="Guan K.L."/>
        </authorList>
    </citation>
    <scope>FUNCTION</scope>
</reference>
<reference key="24">
    <citation type="journal article" date="2007" name="Nature">
        <title>Patterns of somatic mutation in human cancer genomes.</title>
        <authorList>
            <person name="Greenman C."/>
            <person name="Stephens P."/>
            <person name="Smith R."/>
            <person name="Dalgliesh G.L."/>
            <person name="Hunter C."/>
            <person name="Bignell G."/>
            <person name="Davies H."/>
            <person name="Teague J."/>
            <person name="Butler A."/>
            <person name="Stevens C."/>
            <person name="Edkins S."/>
            <person name="O'Meara S."/>
            <person name="Vastrik I."/>
            <person name="Schmidt E.E."/>
            <person name="Avis T."/>
            <person name="Barthorpe S."/>
            <person name="Bhamra G."/>
            <person name="Buck G."/>
            <person name="Choudhury B."/>
            <person name="Clements J."/>
            <person name="Cole J."/>
            <person name="Dicks E."/>
            <person name="Forbes S."/>
            <person name="Gray K."/>
            <person name="Halliday K."/>
            <person name="Harrison R."/>
            <person name="Hills K."/>
            <person name="Hinton J."/>
            <person name="Jenkinson A."/>
            <person name="Jones D."/>
            <person name="Menzies A."/>
            <person name="Mironenko T."/>
            <person name="Perry J."/>
            <person name="Raine K."/>
            <person name="Richardson D."/>
            <person name="Shepherd R."/>
            <person name="Small A."/>
            <person name="Tofts C."/>
            <person name="Varian J."/>
            <person name="Webb T."/>
            <person name="West S."/>
            <person name="Widaa S."/>
            <person name="Yates A."/>
            <person name="Cahill D.P."/>
            <person name="Louis D.N."/>
            <person name="Goldstraw P."/>
            <person name="Nicholson A.G."/>
            <person name="Brasseur F."/>
            <person name="Looijenga L."/>
            <person name="Weber B.L."/>
            <person name="Chiew Y.-E."/>
            <person name="DeFazio A."/>
            <person name="Greaves M.F."/>
            <person name="Green A.R."/>
            <person name="Campbell P."/>
            <person name="Birney E."/>
            <person name="Easton D.F."/>
            <person name="Chenevix-Trench G."/>
            <person name="Tan M.-H."/>
            <person name="Khoo S.K."/>
            <person name="Teh B.T."/>
            <person name="Yuen S.T."/>
            <person name="Leung S.Y."/>
            <person name="Wooster R."/>
            <person name="Futreal P.A."/>
            <person name="Stratton M.R."/>
        </authorList>
    </citation>
    <scope>VARIANTS [LARGE SCALE ANALYSIS] THR-514; ILE-863; VAL-1010 AND VAL-1200</scope>
</reference>
<reference key="25">
    <citation type="journal article" date="2009" name="Anal. Chem.">
        <title>Lys-N and trypsin cover complementary parts of the phosphoproteome in a refined SCX-based approach.</title>
        <authorList>
            <person name="Gauci S."/>
            <person name="Helbig A.O."/>
            <person name="Slijper M."/>
            <person name="Krijgsveld J."/>
            <person name="Heck A.J."/>
            <person name="Mohammed S."/>
        </authorList>
    </citation>
    <scope>VARIANT [LARGE SCALE ANALYSIS] LEU-775</scope>
    <scope>IDENTIFICATION BY MASS SPECTROMETRY [LARGE SCALE ANALYSIS]</scope>
</reference>
<accession>Q8N4C8</accession>
<accession>D3DTK3</accession>
<accession>D3DTK4</accession>
<accession>Q5U8Z0</accession>
<accession>Q9P1X1</accession>
<accession>Q9P2R8</accession>
<organism evidence="19">
    <name type="scientific">Homo sapiens</name>
    <name type="common">Human</name>
    <dbReference type="NCBI Taxonomy" id="9606"/>
    <lineage>
        <taxon>Eukaryota</taxon>
        <taxon>Metazoa</taxon>
        <taxon>Chordata</taxon>
        <taxon>Craniata</taxon>
        <taxon>Vertebrata</taxon>
        <taxon>Euteleostomi</taxon>
        <taxon>Mammalia</taxon>
        <taxon>Eutheria</taxon>
        <taxon>Euarchontoglires</taxon>
        <taxon>Primates</taxon>
        <taxon>Haplorrhini</taxon>
        <taxon>Catarrhini</taxon>
        <taxon>Hominidae</taxon>
        <taxon>Homo</taxon>
    </lineage>
</organism>
<gene>
    <name evidence="21" type="primary">MINK1</name>
    <name type="synonym">B55</name>
    <name evidence="3" type="synonym">MAP4K6</name>
    <name evidence="20" type="synonym">MINK</name>
    <name type="synonym">YSK2</name>
    <name type="synonym">ZC3</name>
</gene>
<name>MINK1_HUMAN</name>
<feature type="chain" id="PRO_0000086329" description="Misshapen-like kinase 1">
    <location>
        <begin position="1"/>
        <end position="1332"/>
    </location>
</feature>
<feature type="domain" description="Protein kinase" evidence="4">
    <location>
        <begin position="25"/>
        <end position="289"/>
    </location>
</feature>
<feature type="domain" description="CNH" evidence="5">
    <location>
        <begin position="1019"/>
        <end position="1306"/>
    </location>
</feature>
<feature type="region of interest" description="Disordered" evidence="7">
    <location>
        <begin position="300"/>
        <end position="347"/>
    </location>
</feature>
<feature type="region of interest" description="Disordered" evidence="7">
    <location>
        <begin position="363"/>
        <end position="383"/>
    </location>
</feature>
<feature type="region of interest" description="Disordered" evidence="7">
    <location>
        <begin position="395"/>
        <end position="887"/>
    </location>
</feature>
<feature type="region of interest" description="Mediates interaction with RAP2A" evidence="13">
    <location>
        <begin position="866"/>
        <end position="1332"/>
    </location>
</feature>
<feature type="region of interest" description="Disordered" evidence="7">
    <location>
        <begin position="902"/>
        <end position="943"/>
    </location>
</feature>
<feature type="compositionally biased region" description="Acidic residues" evidence="7">
    <location>
        <begin position="317"/>
        <end position="333"/>
    </location>
</feature>
<feature type="compositionally biased region" description="Low complexity" evidence="7">
    <location>
        <begin position="371"/>
        <end position="380"/>
    </location>
</feature>
<feature type="compositionally biased region" description="Basic and acidic residues" evidence="7">
    <location>
        <begin position="396"/>
        <end position="466"/>
    </location>
</feature>
<feature type="compositionally biased region" description="Low complexity" evidence="7">
    <location>
        <begin position="479"/>
        <end position="497"/>
    </location>
</feature>
<feature type="compositionally biased region" description="Basic and acidic residues" evidence="7">
    <location>
        <begin position="518"/>
        <end position="528"/>
    </location>
</feature>
<feature type="compositionally biased region" description="Pro residues" evidence="7">
    <location>
        <begin position="547"/>
        <end position="561"/>
    </location>
</feature>
<feature type="compositionally biased region" description="Polar residues" evidence="7">
    <location>
        <begin position="598"/>
        <end position="608"/>
    </location>
</feature>
<feature type="compositionally biased region" description="Polar residues" evidence="7">
    <location>
        <begin position="670"/>
        <end position="682"/>
    </location>
</feature>
<feature type="compositionally biased region" description="Pro residues" evidence="7">
    <location>
        <begin position="716"/>
        <end position="729"/>
    </location>
</feature>
<feature type="compositionally biased region" description="Basic and acidic residues" evidence="7">
    <location>
        <begin position="736"/>
        <end position="748"/>
    </location>
</feature>
<feature type="compositionally biased region" description="Basic and acidic residues" evidence="7">
    <location>
        <begin position="804"/>
        <end position="821"/>
    </location>
</feature>
<feature type="compositionally biased region" description="Acidic residues" evidence="7">
    <location>
        <begin position="828"/>
        <end position="841"/>
    </location>
</feature>
<feature type="compositionally biased region" description="Polar residues" evidence="7">
    <location>
        <begin position="915"/>
        <end position="929"/>
    </location>
</feature>
<feature type="active site" description="Proton acceptor" evidence="4 6">
    <location>
        <position position="153"/>
    </location>
</feature>
<feature type="binding site" evidence="4">
    <location>
        <begin position="31"/>
        <end position="39"/>
    </location>
    <ligand>
        <name>ATP</name>
        <dbReference type="ChEBI" id="CHEBI:30616"/>
    </ligand>
</feature>
<feature type="binding site" evidence="4">
    <location>
        <position position="54"/>
    </location>
    <ligand>
        <name>ATP</name>
        <dbReference type="ChEBI" id="CHEBI:30616"/>
    </ligand>
</feature>
<feature type="modified residue" description="Phosphoserine" evidence="3">
    <location>
        <position position="324"/>
    </location>
</feature>
<feature type="modified residue" description="Phosphoserine" evidence="3">
    <location>
        <position position="326"/>
    </location>
</feature>
<feature type="modified residue" description="Omega-N-methylarginine" evidence="3">
    <location>
        <position position="501"/>
    </location>
</feature>
<feature type="modified residue" description="Omega-N-methylarginine" evidence="33">
    <location>
        <position position="509"/>
    </location>
</feature>
<feature type="modified residue" description="Phosphoserine" evidence="26 32">
    <location>
        <position position="641"/>
    </location>
</feature>
<feature type="modified residue" description="Phosphoserine" evidence="32">
    <location>
        <position position="701"/>
    </location>
</feature>
<feature type="modified residue" description="Phosphoserine" evidence="32">
    <location>
        <position position="754"/>
    </location>
</feature>
<feature type="modified residue" description="Phosphoserine" evidence="22 23 24 25 26 27 30 31 32 34">
    <location>
        <position position="763"/>
    </location>
</feature>
<feature type="modified residue" description="Phosphoserine" evidence="25">
    <location>
        <position position="777"/>
    </location>
</feature>
<feature type="modified residue" description="Phosphoserine" evidence="25 29 32">
    <location>
        <position position="778"/>
    </location>
</feature>
<feature type="modified residue" description="Phosphoserine" evidence="25 26">
    <location>
        <position position="782"/>
    </location>
</feature>
<feature type="modified residue" description="Phosphothreonine" evidence="3">
    <location>
        <position position="891"/>
    </location>
</feature>
<feature type="splice variant" id="VSP_041871" description="In isoform 4 and isoform 5." evidence="17">
    <location>
        <begin position="581"/>
        <end position="600"/>
    </location>
</feature>
<feature type="splice variant" id="VSP_007059" description="In isoform 1, isoform 2 and isoform 5." evidence="16">
    <location>
        <begin position="696"/>
        <end position="732"/>
    </location>
</feature>
<feature type="splice variant" id="VSP_007060" description="In isoform 2." evidence="16">
    <original>A</original>
    <variation>ASYKRAIGE</variation>
    <location>
        <position position="800"/>
    </location>
</feature>
<feature type="sequence variant" id="VAR_040799" description="In dbSNP:rs56131206." evidence="12">
    <original>A</original>
    <variation>T</variation>
    <location>
        <position position="514"/>
    </location>
</feature>
<feature type="sequence variant" id="VAR_046058" description="In dbSNP:rs11556634." evidence="9 10">
    <original>V</original>
    <variation>A</variation>
    <location>
        <position position="771"/>
    </location>
</feature>
<feature type="sequence variant" id="VAR_046059" description="In dbSNP:rs11556635." evidence="9 10 25 26 27 28 29 32">
    <original>P</original>
    <variation>L</variation>
    <location>
        <position position="775"/>
    </location>
</feature>
<feature type="sequence variant" id="VAR_046060" description="In dbSNP:rs2302319." evidence="12">
    <original>V</original>
    <variation>I</variation>
    <location>
        <position position="863"/>
    </location>
</feature>
<feature type="sequence variant" id="VAR_046061" description="In a gastric adenocarcinoma sample; somatic mutation." evidence="12">
    <original>E</original>
    <variation>V</variation>
    <location>
        <position position="1010"/>
    </location>
</feature>
<feature type="sequence variant" id="VAR_040800" evidence="12">
    <original>I</original>
    <variation>V</variation>
    <location>
        <position position="1200"/>
    </location>
</feature>
<protein>
    <recommendedName>
        <fullName>Misshapen-like kinase 1</fullName>
        <ecNumber>2.7.11.1</ecNumber>
    </recommendedName>
    <alternativeName>
        <fullName>GCK family kinase MiNK</fullName>
    </alternativeName>
    <alternativeName>
        <fullName>MAPK/ERK kinase kinase kinase 6</fullName>
        <shortName>MEK kinase kinase 6</shortName>
        <shortName>MEKKK 6</shortName>
    </alternativeName>
    <alternativeName>
        <fullName>Misshapen/NIK-related kinase</fullName>
    </alternativeName>
    <alternativeName>
        <fullName>Mitogen-activated protein kinase kinase kinase kinase 6</fullName>
    </alternativeName>
</protein>
<proteinExistence type="evidence at protein level"/>
<keyword id="KW-0025">Alternative splicing</keyword>
<keyword id="KW-0067">ATP-binding</keyword>
<keyword id="KW-0966">Cell projection</keyword>
<keyword id="KW-0963">Cytoplasm</keyword>
<keyword id="KW-0333">Golgi apparatus</keyword>
<keyword id="KW-0418">Kinase</keyword>
<keyword id="KW-0488">Methylation</keyword>
<keyword id="KW-0547">Nucleotide-binding</keyword>
<keyword id="KW-0597">Phosphoprotein</keyword>
<keyword id="KW-1267">Proteomics identification</keyword>
<keyword id="KW-1185">Reference proteome</keyword>
<keyword id="KW-0723">Serine/threonine-protein kinase</keyword>
<keyword id="KW-0770">Synapse</keyword>
<keyword id="KW-0808">Transferase</keyword>
<sequence length="1332" mass="149822">MGDPAPARSLDDIDLSALRDPAGIFELVEVVGNGTYGQVYKGRHVKTGQLAAIKVMDVTEDEEEEIKQEINMLKKYSHHRNIATYYGAFIKKSPPGNDDQLWLVMEFCGAGSVTDLVKNTKGNALKEDCIAYICREILRGLAHLHAHKVIHRDIKGQNVLLTENAEVKLVDFGVSAQLDRTVGRRNTFIGTPYWMAPEVIACDENPDATYDYRSDIWSLGITAIEMAEGAPPLCDMHPMRALFLIPRNPPPRLKSKKWSKKFIDFIDTCLIKTYLSRPPTEQLLKFPFIRDQPTERQVRIQLKDHIDRSRKKRGEKEETEYEYSGSEEEDDSHGEEGEPSSIMNVPGESTLRREFLRLQQENKSNSEALKQQQQLQQQQQRDPEAHIKHLLHQRQRRIEEQKEERRRVEEQQRREREQRKLQEKEQQRRLEDMQALRREEERRQAEREQEYKRKQLEEQRQSERLQRQLQQEHAYLKSLQQQQQQQQLQKQQQQQLLPGDRKPLYHYGRGMNPADKPAWAREVEERTRMNKQQNSPLAKSKPGSTGPEPPIPQASPGPPGPLSQTPPMQRPVEPQEGPHKSLVAHRVPLKPYAAPVPRSQSLQDQPTRNLAAFPASHDPDPAIPAPTATPSARGAVIRQNSDPTSEGPGPSPNPPAWVRPDNEAPPKVPQRTSSIATALNTSGAGGSRPAQAVRARPRSNSAWQIYLQRRAERGTPKPPGPPAQPPGPPNASSNPDLRRSDPGWERSDSVLPASHGHLPQAGSLERNRVGVSSKPDSSPVLSPGNKAKPDDHRSRPGRPADFVLLKERTLDEAPRPPKKAMDYSSSSEEVESSEDDEEEGEGGPAEGSRDTPGGRSDGDTDSVSTMVVHDVEEITGTQPPYGGGTMVVQRTPEEERNLLHADSNGYTNLPDVVQPSHSPTENSKGQSPPSKDGSGDYQSRGLVKAPGKSSFTMFVDLGIYQPGGSGDSIPITALVGGEGTRLDQLQYDVRKGSVVNVNPTNTRAHSETPEIRKYKKRFNSEILCAALWGVNLLVGTENGLMLLDRSGQGKVYGLIGRRRFQQMDVLEGLNLLITISGKRNKLRVYYLSWLRNKILHNDPEVEKKQGWTTVGDMEGCGHYRVVKYERIKFLVIALKSSVEVYAWAPKPYHKFMAFKSFADLPHRPLLVDLTVEEGQRLKVIYGSSAGFHAVDVDSGNSYDIYIPVHIQSQITPHAIIFLPNTDGMEMLLCYEDEGVYVNTYGRIIKDVVLQWGEMPTSVAYICSNQIMGWGEKAIEIRSVETGHLDGVFMHKRAQRLKFLCERNDKVFFASVRSGGSSQVYFMTLNRNCIMNW</sequence>
<dbReference type="EC" id="2.7.11.1"/>
<dbReference type="EMBL" id="AB041926">
    <property type="protein sequence ID" value="BAA94838.1"/>
    <property type="molecule type" value="mRNA"/>
</dbReference>
<dbReference type="EMBL" id="AB035698">
    <property type="protein sequence ID" value="BAA90753.1"/>
    <property type="molecule type" value="mRNA"/>
</dbReference>
<dbReference type="EMBL" id="AY775058">
    <property type="protein sequence ID" value="AAV41830.1"/>
    <property type="molecule type" value="mRNA"/>
</dbReference>
<dbReference type="EMBL" id="AC233723">
    <property type="status" value="NOT_ANNOTATED_CDS"/>
    <property type="molecule type" value="Genomic_DNA"/>
</dbReference>
<dbReference type="EMBL" id="CH471108">
    <property type="protein sequence ID" value="EAW90401.1"/>
    <property type="molecule type" value="Genomic_DNA"/>
</dbReference>
<dbReference type="EMBL" id="CH471108">
    <property type="protein sequence ID" value="EAW90403.1"/>
    <property type="molecule type" value="Genomic_DNA"/>
</dbReference>
<dbReference type="EMBL" id="CH471108">
    <property type="protein sequence ID" value="EAW90399.1"/>
    <property type="molecule type" value="Genomic_DNA"/>
</dbReference>
<dbReference type="EMBL" id="CH471108">
    <property type="protein sequence ID" value="EAW90400.1"/>
    <property type="molecule type" value="Genomic_DNA"/>
</dbReference>
<dbReference type="EMBL" id="CH471108">
    <property type="protein sequence ID" value="EAW90402.1"/>
    <property type="molecule type" value="Genomic_DNA"/>
</dbReference>
<dbReference type="EMBL" id="BC034673">
    <property type="protein sequence ID" value="AAH34673.1"/>
    <property type="molecule type" value="mRNA"/>
</dbReference>
<dbReference type="CCDS" id="CCDS45588.1">
    <molecule id="Q8N4C8-1"/>
</dbReference>
<dbReference type="CCDS" id="CCDS45589.1">
    <molecule id="Q8N4C8-3"/>
</dbReference>
<dbReference type="CCDS" id="CCDS45590.1">
    <molecule id="Q8N4C8-4"/>
</dbReference>
<dbReference type="RefSeq" id="NP_001020108.1">
    <molecule id="Q8N4C8-4"/>
    <property type="nucleotide sequence ID" value="NM_001024937.4"/>
</dbReference>
<dbReference type="RefSeq" id="NP_001308165.1">
    <property type="nucleotide sequence ID" value="NM_001321236.1"/>
</dbReference>
<dbReference type="RefSeq" id="NP_056531.1">
    <molecule id="Q8N4C8-2"/>
    <property type="nucleotide sequence ID" value="NM_015716.5"/>
</dbReference>
<dbReference type="RefSeq" id="NP_722549.2">
    <molecule id="Q8N4C8-1"/>
    <property type="nucleotide sequence ID" value="NM_153827.4"/>
</dbReference>
<dbReference type="RefSeq" id="NP_733763.1">
    <molecule id="Q8N4C8-3"/>
    <property type="nucleotide sequence ID" value="NM_170663.5"/>
</dbReference>
<dbReference type="RefSeq" id="XP_047292132.1">
    <molecule id="Q8N4C8-5"/>
    <property type="nucleotide sequence ID" value="XM_047436176.1"/>
</dbReference>
<dbReference type="SMR" id="Q8N4C8"/>
<dbReference type="BioGRID" id="119075">
    <property type="interactions" value="183"/>
</dbReference>
<dbReference type="FunCoup" id="Q8N4C8">
    <property type="interactions" value="2105"/>
</dbReference>
<dbReference type="IntAct" id="Q8N4C8">
    <property type="interactions" value="100"/>
</dbReference>
<dbReference type="MINT" id="Q8N4C8"/>
<dbReference type="STRING" id="9606.ENSP00000347427"/>
<dbReference type="BindingDB" id="Q8N4C8"/>
<dbReference type="ChEMBL" id="CHEMBL5518"/>
<dbReference type="DrugBank" id="DB12010">
    <property type="generic name" value="Fostamatinib"/>
</dbReference>
<dbReference type="DrugCentral" id="Q8N4C8"/>
<dbReference type="GuidetoPHARMACOLOGY" id="2103"/>
<dbReference type="GlyCosmos" id="Q8N4C8">
    <property type="glycosylation" value="1 site, 1 glycan"/>
</dbReference>
<dbReference type="GlyGen" id="Q8N4C8">
    <property type="glycosylation" value="3 sites, 1 N-linked glycan (1 site), 1 O-linked glycan (1 site)"/>
</dbReference>
<dbReference type="iPTMnet" id="Q8N4C8"/>
<dbReference type="PhosphoSitePlus" id="Q8N4C8"/>
<dbReference type="SwissPalm" id="Q8N4C8"/>
<dbReference type="BioMuta" id="MINK1"/>
<dbReference type="DMDM" id="296437370"/>
<dbReference type="jPOST" id="Q8N4C8"/>
<dbReference type="MassIVE" id="Q8N4C8"/>
<dbReference type="PaxDb" id="9606-ENSP00000347427"/>
<dbReference type="PeptideAtlas" id="Q8N4C8"/>
<dbReference type="ProteomicsDB" id="71917">
    <molecule id="Q8N4C8-1"/>
</dbReference>
<dbReference type="ProteomicsDB" id="71918">
    <molecule id="Q8N4C8-2"/>
</dbReference>
<dbReference type="ProteomicsDB" id="71919">
    <molecule id="Q8N4C8-3"/>
</dbReference>
<dbReference type="ProteomicsDB" id="71920">
    <molecule id="Q8N4C8-4"/>
</dbReference>
<dbReference type="ProteomicsDB" id="71921">
    <molecule id="Q8N4C8-5"/>
</dbReference>
<dbReference type="Pumba" id="Q8N4C8"/>
<dbReference type="Antibodypedia" id="5678">
    <property type="antibodies" value="234 antibodies from 32 providers"/>
</dbReference>
<dbReference type="DNASU" id="50488"/>
<dbReference type="Ensembl" id="ENST00000347992.11">
    <molecule id="Q8N4C8-3"/>
    <property type="protein sequence ID" value="ENSP00000269296.7"/>
    <property type="gene ID" value="ENSG00000141503.17"/>
</dbReference>
<dbReference type="Ensembl" id="ENST00000355280.11">
    <molecule id="Q8N4C8-1"/>
    <property type="protein sequence ID" value="ENSP00000347427.6"/>
    <property type="gene ID" value="ENSG00000141503.17"/>
</dbReference>
<dbReference type="Ensembl" id="ENST00000453408.7">
    <molecule id="Q8N4C8-4"/>
    <property type="protein sequence ID" value="ENSP00000406487.3"/>
    <property type="gene ID" value="ENSG00000141503.17"/>
</dbReference>
<dbReference type="GeneID" id="50488"/>
<dbReference type="KEGG" id="hsa:50488"/>
<dbReference type="MANE-Select" id="ENST00000355280.11">
    <property type="protein sequence ID" value="ENSP00000347427.6"/>
    <property type="RefSeq nucleotide sequence ID" value="NM_153827.5"/>
    <property type="RefSeq protein sequence ID" value="NP_722549.2"/>
</dbReference>
<dbReference type="UCSC" id="uc010vsl.3">
    <molecule id="Q8N4C8-1"/>
    <property type="organism name" value="human"/>
</dbReference>
<dbReference type="AGR" id="HGNC:17565"/>
<dbReference type="CTD" id="50488"/>
<dbReference type="DisGeNET" id="50488"/>
<dbReference type="GeneCards" id="MINK1"/>
<dbReference type="HGNC" id="HGNC:17565">
    <property type="gene designation" value="MINK1"/>
</dbReference>
<dbReference type="HPA" id="ENSG00000141503">
    <property type="expression patterns" value="Low tissue specificity"/>
</dbReference>
<dbReference type="MalaCards" id="MINK1"/>
<dbReference type="MIM" id="609426">
    <property type="type" value="gene"/>
</dbReference>
<dbReference type="neXtProt" id="NX_Q8N4C8"/>
<dbReference type="OpenTargets" id="ENSG00000141503"/>
<dbReference type="PharmGKB" id="PA134910641"/>
<dbReference type="VEuPathDB" id="HostDB:ENSG00000141503"/>
<dbReference type="eggNOG" id="KOG0587">
    <property type="taxonomic scope" value="Eukaryota"/>
</dbReference>
<dbReference type="GeneTree" id="ENSGT00950000183196"/>
<dbReference type="InParanoid" id="Q8N4C8"/>
<dbReference type="OMA" id="QIPPGDR"/>
<dbReference type="OrthoDB" id="8957712at2759"/>
<dbReference type="PAN-GO" id="Q8N4C8">
    <property type="GO annotations" value="7 GO annotations based on evolutionary models"/>
</dbReference>
<dbReference type="PhylomeDB" id="Q8N4C8"/>
<dbReference type="TreeFam" id="TF105138"/>
<dbReference type="PathwayCommons" id="Q8N4C8"/>
<dbReference type="Reactome" id="R-HSA-2559580">
    <property type="pathway name" value="Oxidative Stress Induced Senescence"/>
</dbReference>
<dbReference type="SignaLink" id="Q8N4C8"/>
<dbReference type="SIGNOR" id="Q8N4C8"/>
<dbReference type="BioGRID-ORCS" id="50488">
    <property type="hits" value="16 hits in 1191 CRISPR screens"/>
</dbReference>
<dbReference type="CD-CODE" id="FB4E32DD">
    <property type="entry name" value="Presynaptic clusters and postsynaptic densities"/>
</dbReference>
<dbReference type="ChiTaRS" id="MINK1">
    <property type="organism name" value="human"/>
</dbReference>
<dbReference type="GeneWiki" id="MINK1"/>
<dbReference type="GenomeRNAi" id="50488"/>
<dbReference type="Pharos" id="Q8N4C8">
    <property type="development level" value="Tchem"/>
</dbReference>
<dbReference type="PRO" id="PR:Q8N4C8"/>
<dbReference type="Proteomes" id="UP000005640">
    <property type="component" value="Chromosome 17"/>
</dbReference>
<dbReference type="RNAct" id="Q8N4C8">
    <property type="molecule type" value="protein"/>
</dbReference>
<dbReference type="Bgee" id="ENSG00000141503">
    <property type="expression patterns" value="Expressed in CA1 field of hippocampus and 208 other cell types or tissues"/>
</dbReference>
<dbReference type="ExpressionAtlas" id="Q8N4C8">
    <property type="expression patterns" value="baseline and differential"/>
</dbReference>
<dbReference type="GO" id="GO:0030424">
    <property type="term" value="C:axon"/>
    <property type="evidence" value="ECO:0007669"/>
    <property type="project" value="UniProtKB-SubCell"/>
</dbReference>
<dbReference type="GO" id="GO:0005737">
    <property type="term" value="C:cytoplasm"/>
    <property type="evidence" value="ECO:0000314"/>
    <property type="project" value="UniProtKB"/>
</dbReference>
<dbReference type="GO" id="GO:0005829">
    <property type="term" value="C:cytosol"/>
    <property type="evidence" value="ECO:0000304"/>
    <property type="project" value="Reactome"/>
</dbReference>
<dbReference type="GO" id="GO:0030425">
    <property type="term" value="C:dendrite"/>
    <property type="evidence" value="ECO:0007669"/>
    <property type="project" value="UniProtKB-SubCell"/>
</dbReference>
<dbReference type="GO" id="GO:0070062">
    <property type="term" value="C:extracellular exosome"/>
    <property type="evidence" value="ECO:0007005"/>
    <property type="project" value="UniProtKB"/>
</dbReference>
<dbReference type="GO" id="GO:0005794">
    <property type="term" value="C:Golgi apparatus"/>
    <property type="evidence" value="ECO:0000314"/>
    <property type="project" value="UniProtKB"/>
</dbReference>
<dbReference type="GO" id="GO:0014069">
    <property type="term" value="C:postsynaptic density"/>
    <property type="evidence" value="ECO:0007669"/>
    <property type="project" value="UniProtKB-SubCell"/>
</dbReference>
<dbReference type="GO" id="GO:0005524">
    <property type="term" value="F:ATP binding"/>
    <property type="evidence" value="ECO:0000250"/>
    <property type="project" value="UniProtKB"/>
</dbReference>
<dbReference type="GO" id="GO:0004672">
    <property type="term" value="F:protein kinase activity"/>
    <property type="evidence" value="ECO:0000304"/>
    <property type="project" value="ProtInc"/>
</dbReference>
<dbReference type="GO" id="GO:0106310">
    <property type="term" value="F:protein serine kinase activity"/>
    <property type="evidence" value="ECO:0007669"/>
    <property type="project" value="RHEA"/>
</dbReference>
<dbReference type="GO" id="GO:0004674">
    <property type="term" value="F:protein serine/threonine kinase activity"/>
    <property type="evidence" value="ECO:0000314"/>
    <property type="project" value="UniProtKB"/>
</dbReference>
<dbReference type="GO" id="GO:0030036">
    <property type="term" value="P:actin cytoskeleton organization"/>
    <property type="evidence" value="ECO:0000315"/>
    <property type="project" value="UniProtKB"/>
</dbReference>
<dbReference type="GO" id="GO:0007420">
    <property type="term" value="P:brain development"/>
    <property type="evidence" value="ECO:0000250"/>
    <property type="project" value="UniProtKB"/>
</dbReference>
<dbReference type="GO" id="GO:0007268">
    <property type="term" value="P:chemical synaptic transmission"/>
    <property type="evidence" value="ECO:0000250"/>
    <property type="project" value="UniProtKB"/>
</dbReference>
<dbReference type="GO" id="GO:0048813">
    <property type="term" value="P:dendrite morphogenesis"/>
    <property type="evidence" value="ECO:0000250"/>
    <property type="project" value="UniProtKB"/>
</dbReference>
<dbReference type="GO" id="GO:0007254">
    <property type="term" value="P:JNK cascade"/>
    <property type="evidence" value="ECO:0000304"/>
    <property type="project" value="ProtInc"/>
</dbReference>
<dbReference type="GO" id="GO:0000165">
    <property type="term" value="P:MAPK cascade"/>
    <property type="evidence" value="ECO:0000318"/>
    <property type="project" value="GO_Central"/>
</dbReference>
<dbReference type="GO" id="GO:0048812">
    <property type="term" value="P:neuron projection morphogenesis"/>
    <property type="evidence" value="ECO:0000318"/>
    <property type="project" value="GO_Central"/>
</dbReference>
<dbReference type="GO" id="GO:0046330">
    <property type="term" value="P:positive regulation of JNK cascade"/>
    <property type="evidence" value="ECO:0000315"/>
    <property type="project" value="UniProtKB"/>
</dbReference>
<dbReference type="GO" id="GO:1900745">
    <property type="term" value="P:positive regulation of p38MAPK cascade"/>
    <property type="evidence" value="ECO:0000250"/>
    <property type="project" value="UniProtKB"/>
</dbReference>
<dbReference type="GO" id="GO:0046777">
    <property type="term" value="P:protein autophosphorylation"/>
    <property type="evidence" value="ECO:0000314"/>
    <property type="project" value="UniProtKB"/>
</dbReference>
<dbReference type="GO" id="GO:0006468">
    <property type="term" value="P:protein phosphorylation"/>
    <property type="evidence" value="ECO:0000315"/>
    <property type="project" value="CACAO"/>
</dbReference>
<dbReference type="GO" id="GO:2000311">
    <property type="term" value="P:regulation of AMPA receptor activity"/>
    <property type="evidence" value="ECO:0000250"/>
    <property type="project" value="UniProtKB"/>
</dbReference>
<dbReference type="GO" id="GO:0030334">
    <property type="term" value="P:regulation of cell migration"/>
    <property type="evidence" value="ECO:0000315"/>
    <property type="project" value="UniProtKB"/>
</dbReference>
<dbReference type="GO" id="GO:0022407">
    <property type="term" value="P:regulation of cell-cell adhesion"/>
    <property type="evidence" value="ECO:0000315"/>
    <property type="project" value="UniProtKB"/>
</dbReference>
<dbReference type="GO" id="GO:0001952">
    <property type="term" value="P:regulation of cell-matrix adhesion"/>
    <property type="evidence" value="ECO:0000315"/>
    <property type="project" value="UniProtKB"/>
</dbReference>
<dbReference type="GO" id="GO:0043408">
    <property type="term" value="P:regulation of MAPK cascade"/>
    <property type="evidence" value="ECO:0000318"/>
    <property type="project" value="GO_Central"/>
</dbReference>
<dbReference type="CDD" id="cd06636">
    <property type="entry name" value="STKc_MAP4K4_6_N"/>
    <property type="match status" value="1"/>
</dbReference>
<dbReference type="FunFam" id="1.10.510.10:FF:000003">
    <property type="entry name" value="TRAF2 and NCK-interacting protein kinase isoform 4"/>
    <property type="match status" value="1"/>
</dbReference>
<dbReference type="FunFam" id="3.30.200.20:FF:000006">
    <property type="entry name" value="TRAF2 and NCK-interacting protein kinase isoform 4"/>
    <property type="match status" value="1"/>
</dbReference>
<dbReference type="Gene3D" id="3.30.200.20">
    <property type="entry name" value="Phosphorylase Kinase, domain 1"/>
    <property type="match status" value="1"/>
</dbReference>
<dbReference type="Gene3D" id="1.10.510.10">
    <property type="entry name" value="Transferase(Phosphotransferase) domain 1"/>
    <property type="match status" value="1"/>
</dbReference>
<dbReference type="InterPro" id="IPR001180">
    <property type="entry name" value="CNH_dom"/>
</dbReference>
<dbReference type="InterPro" id="IPR011009">
    <property type="entry name" value="Kinase-like_dom_sf"/>
</dbReference>
<dbReference type="InterPro" id="IPR000719">
    <property type="entry name" value="Prot_kinase_dom"/>
</dbReference>
<dbReference type="InterPro" id="IPR017441">
    <property type="entry name" value="Protein_kinase_ATP_BS"/>
</dbReference>
<dbReference type="InterPro" id="IPR008271">
    <property type="entry name" value="Ser/Thr_kinase_AS"/>
</dbReference>
<dbReference type="InterPro" id="IPR051700">
    <property type="entry name" value="STE20_Ser-Thr_kinase"/>
</dbReference>
<dbReference type="PANTHER" id="PTHR47096">
    <property type="entry name" value="MISSHAPEN LIKE KINASE 1"/>
    <property type="match status" value="1"/>
</dbReference>
<dbReference type="PANTHER" id="PTHR47096:SF1">
    <property type="entry name" value="MISSHAPEN LIKE KINASE 1"/>
    <property type="match status" value="1"/>
</dbReference>
<dbReference type="Pfam" id="PF00780">
    <property type="entry name" value="CNH"/>
    <property type="match status" value="1"/>
</dbReference>
<dbReference type="Pfam" id="PF00069">
    <property type="entry name" value="Pkinase"/>
    <property type="match status" value="1"/>
</dbReference>
<dbReference type="SMART" id="SM00036">
    <property type="entry name" value="CNH"/>
    <property type="match status" value="1"/>
</dbReference>
<dbReference type="SMART" id="SM00220">
    <property type="entry name" value="S_TKc"/>
    <property type="match status" value="1"/>
</dbReference>
<dbReference type="SUPFAM" id="SSF56112">
    <property type="entry name" value="Protein kinase-like (PK-like)"/>
    <property type="match status" value="1"/>
</dbReference>
<dbReference type="PROSITE" id="PS50219">
    <property type="entry name" value="CNH"/>
    <property type="match status" value="1"/>
</dbReference>
<dbReference type="PROSITE" id="PS00107">
    <property type="entry name" value="PROTEIN_KINASE_ATP"/>
    <property type="match status" value="1"/>
</dbReference>
<dbReference type="PROSITE" id="PS50011">
    <property type="entry name" value="PROTEIN_KINASE_DOM"/>
    <property type="match status" value="1"/>
</dbReference>
<dbReference type="PROSITE" id="PS00108">
    <property type="entry name" value="PROTEIN_KINASE_ST"/>
    <property type="match status" value="1"/>
</dbReference>
<evidence type="ECO:0000250" key="1"/>
<evidence type="ECO:0000250" key="2">
    <source>
        <dbReference type="UniProtKB" id="F1LP90"/>
    </source>
</evidence>
<evidence type="ECO:0000250" key="3">
    <source>
        <dbReference type="UniProtKB" id="Q9JM52"/>
    </source>
</evidence>
<evidence type="ECO:0000255" key="4">
    <source>
        <dbReference type="PROSITE-ProRule" id="PRU00159"/>
    </source>
</evidence>
<evidence type="ECO:0000255" key="5">
    <source>
        <dbReference type="PROSITE-ProRule" id="PRU00795"/>
    </source>
</evidence>
<evidence type="ECO:0000255" key="6">
    <source>
        <dbReference type="PROSITE-ProRule" id="PRU10027"/>
    </source>
</evidence>
<evidence type="ECO:0000256" key="7">
    <source>
        <dbReference type="SAM" id="MobiDB-lite"/>
    </source>
</evidence>
<evidence type="ECO:0000269" key="8">
    <source>
    </source>
</evidence>
<evidence type="ECO:0000269" key="9">
    <source>
    </source>
</evidence>
<evidence type="ECO:0000269" key="10">
    <source>
    </source>
</evidence>
<evidence type="ECO:0000269" key="11">
    <source>
    </source>
</evidence>
<evidence type="ECO:0000269" key="12">
    <source>
    </source>
</evidence>
<evidence type="ECO:0000269" key="13">
    <source>
    </source>
</evidence>
<evidence type="ECO:0000269" key="14">
    <source>
    </source>
</evidence>
<evidence type="ECO:0000269" key="15">
    <source>
    </source>
</evidence>
<evidence type="ECO:0000303" key="16">
    <source>
    </source>
</evidence>
<evidence type="ECO:0000303" key="17">
    <source>
    </source>
</evidence>
<evidence type="ECO:0000305" key="18"/>
<evidence type="ECO:0000312" key="19">
    <source>
        <dbReference type="EMBL" id="AAH34673.1"/>
    </source>
</evidence>
<evidence type="ECO:0000312" key="20">
    <source>
        <dbReference type="EMBL" id="BAA94838.1"/>
    </source>
</evidence>
<evidence type="ECO:0000312" key="21">
    <source>
        <dbReference type="HGNC" id="HGNC:17565"/>
    </source>
</evidence>
<evidence type="ECO:0007744" key="22">
    <source>
    </source>
</evidence>
<evidence type="ECO:0007744" key="23">
    <source>
    </source>
</evidence>
<evidence type="ECO:0007744" key="24">
    <source>
    </source>
</evidence>
<evidence type="ECO:0007744" key="25">
    <source>
    </source>
</evidence>
<evidence type="ECO:0007744" key="26">
    <source>
    </source>
</evidence>
<evidence type="ECO:0007744" key="27">
    <source>
    </source>
</evidence>
<evidence type="ECO:0007744" key="28">
    <source>
    </source>
</evidence>
<evidence type="ECO:0007744" key="29">
    <source>
    </source>
</evidence>
<evidence type="ECO:0007744" key="30">
    <source>
    </source>
</evidence>
<evidence type="ECO:0007744" key="31">
    <source>
    </source>
</evidence>
<evidence type="ECO:0007744" key="32">
    <source>
    </source>
</evidence>
<evidence type="ECO:0007744" key="33">
    <source>
    </source>
</evidence>
<evidence type="ECO:0007744" key="34">
    <source>
    </source>
</evidence>